<sequence length="594" mass="66029">MVLLHVLFEHAVGYALLALKEVEEISLLQPQVEESVLNLGKFHNIVRLVAFCPFASSQVALENANAVSEGVVHEDLRLLLETHLPSKKKKVLLGVGDPKIGAAIQEELGYNCQTGGVIAEILRGVRLHFHNLVKGLTDLSACKAQLGLGHSYSRAKVKFNVNRVDNMIIQSISLLDQLDKDINTFSMRVREWYGYHFPELVKIINDNATYCRLAQFIGNRRELNEEKLEKLEELTMDGAKAKAILDASRSSMGMDISAIDLINIESFSSRVVSLSEYRQSLHTYLRSKMSQVAPSLSALIGEAVGARLIAHAGSLTNLAKYPASTVQILGAEKALFRALKTRGNTPKYGLIFHSTFIGRAAAKNKGRISRYLANKCSIASRIDCFSEVPTSVFGEKLREQVEERLSFYETGEIPRKNLDVMKEAMVQAEEAAAEITRKLEKQEKKRLKKEKKRLAALALASSENSSSTPEECEETSEKPKKKKKQKPQEVPQENGMEDPSIPFSKPKKKKSFSKEELMSSDLEETAGSTSLPKRKKSSPKEETVNDPEEAGHRSGSKKKRKFSKEEPVSSGPEEAAGKSSSKKKKKFHKASQED</sequence>
<feature type="chain" id="PRO_0000219026" description="Nucleolar protein 56">
    <location>
        <begin position="1"/>
        <end position="594"/>
    </location>
</feature>
<feature type="domain" description="Nop" evidence="3">
    <location>
        <begin position="292"/>
        <end position="410"/>
    </location>
</feature>
<feature type="region of interest" description="Disordered" evidence="4">
    <location>
        <begin position="457"/>
        <end position="594"/>
    </location>
</feature>
<feature type="compositionally biased region" description="Low complexity" evidence="4">
    <location>
        <begin position="457"/>
        <end position="469"/>
    </location>
</feature>
<feature type="compositionally biased region" description="Basic residues" evidence="4">
    <location>
        <begin position="580"/>
        <end position="594"/>
    </location>
</feature>
<feature type="modified residue" description="Phosphoserine" evidence="1">
    <location>
        <position position="314"/>
    </location>
</feature>
<feature type="modified residue" description="Omega-N-methylarginine" evidence="1">
    <location>
        <position position="359"/>
    </location>
</feature>
<feature type="modified residue" description="Phosphoserine" evidence="2">
    <location>
        <position position="466"/>
    </location>
</feature>
<feature type="modified residue" description="Phosphoserine" evidence="2">
    <location>
        <position position="467"/>
    </location>
</feature>
<feature type="modified residue" description="Phosphothreonine" evidence="2">
    <location>
        <position position="468"/>
    </location>
</feature>
<feature type="modified residue" description="Phosphoserine" evidence="1">
    <location>
        <position position="511"/>
    </location>
</feature>
<feature type="modified residue" description="Phosphoserine" evidence="1">
    <location>
        <position position="519"/>
    </location>
</feature>
<feature type="modified residue" description="Phosphoserine" evidence="1">
    <location>
        <position position="520"/>
    </location>
</feature>
<feature type="modified residue" description="Phosphoserine" evidence="2">
    <location>
        <position position="537"/>
    </location>
</feature>
<feature type="modified residue" description="N6-acetyllysine" evidence="2">
    <location>
        <position position="561"/>
    </location>
</feature>
<feature type="modified residue" description="Phosphoserine" evidence="1">
    <location>
        <position position="563"/>
    </location>
</feature>
<feature type="modified residue" description="Phosphoserine" evidence="1">
    <location>
        <position position="569"/>
    </location>
</feature>
<feature type="modified residue" description="Phosphoserine" evidence="1">
    <location>
        <position position="570"/>
    </location>
</feature>
<feature type="modified residue" description="Phosphoserine" evidence="1">
    <location>
        <position position="579"/>
    </location>
</feature>
<feature type="modified residue" description="Phosphoserine" evidence="1">
    <location>
        <position position="581"/>
    </location>
</feature>
<feature type="cross-link" description="Glycyl lysine isopeptide (Lys-Gly) (interchain with G-Cter in SUMO2)" evidence="1">
    <location>
        <position position="87"/>
    </location>
</feature>
<feature type="cross-link" description="Glycyl lysine isopeptide (Lys-Gly) (interchain with G-Cter in SUMO2)" evidence="1">
    <location>
        <position position="230"/>
    </location>
</feature>
<feature type="cross-link" description="Glycyl lysine isopeptide (Lys-Gly) (interchain with G-Cter in SUMO2)" evidence="1">
    <location>
        <position position="240"/>
    </location>
</feature>
<feature type="cross-link" description="Glycyl lysine isopeptide (Lys-Gly) (interchain with G-Cter in SUMO2)" evidence="1">
    <location>
        <position position="540"/>
    </location>
</feature>
<feature type="cross-link" description="Glycyl lysine isopeptide (Lys-Gly) (interchain with G-Cter in SUMO2)" evidence="1">
    <location>
        <position position="564"/>
    </location>
</feature>
<dbReference type="EMBL" id="AB066543">
    <property type="protein sequence ID" value="BAB62217.1"/>
    <property type="molecule type" value="mRNA"/>
</dbReference>
<dbReference type="RefSeq" id="NP_001271483.1">
    <property type="nucleotide sequence ID" value="NM_001284554.1"/>
</dbReference>
<dbReference type="SMR" id="Q95K50"/>
<dbReference type="STRING" id="9541.ENSMFAP00000041101"/>
<dbReference type="VEuPathDB" id="HostDB:ENSMFAG00000041293"/>
<dbReference type="eggNOG" id="KOG2573">
    <property type="taxonomic scope" value="Eukaryota"/>
</dbReference>
<dbReference type="OMA" id="PDNYMFA"/>
<dbReference type="Proteomes" id="UP000233100">
    <property type="component" value="Chromosome 10"/>
</dbReference>
<dbReference type="GO" id="GO:0031428">
    <property type="term" value="C:box C/D methylation guide snoRNP complex"/>
    <property type="evidence" value="ECO:0000250"/>
    <property type="project" value="UniProtKB"/>
</dbReference>
<dbReference type="GO" id="GO:0005737">
    <property type="term" value="C:cytoplasm"/>
    <property type="evidence" value="ECO:0007669"/>
    <property type="project" value="UniProtKB-SubCell"/>
</dbReference>
<dbReference type="GO" id="GO:0005730">
    <property type="term" value="C:nucleolus"/>
    <property type="evidence" value="ECO:0007669"/>
    <property type="project" value="UniProtKB-SubCell"/>
</dbReference>
<dbReference type="GO" id="GO:0005654">
    <property type="term" value="C:nucleoplasm"/>
    <property type="evidence" value="ECO:0007669"/>
    <property type="project" value="UniProtKB-SubCell"/>
</dbReference>
<dbReference type="GO" id="GO:0032040">
    <property type="term" value="C:small-subunit processome"/>
    <property type="evidence" value="ECO:0000250"/>
    <property type="project" value="UniProtKB"/>
</dbReference>
<dbReference type="GO" id="GO:0030515">
    <property type="term" value="F:snoRNA binding"/>
    <property type="evidence" value="ECO:0007669"/>
    <property type="project" value="InterPro"/>
</dbReference>
<dbReference type="GO" id="GO:0042274">
    <property type="term" value="P:ribosomal small subunit biogenesis"/>
    <property type="evidence" value="ECO:0000250"/>
    <property type="project" value="UniProtKB"/>
</dbReference>
<dbReference type="FunFam" id="1.10.246.90:FF:000001">
    <property type="entry name" value="Nucleolar protein 56"/>
    <property type="match status" value="1"/>
</dbReference>
<dbReference type="FunFam" id="1.10.287.4070:FF:000002">
    <property type="entry name" value="Nucleolar protein 56"/>
    <property type="match status" value="1"/>
</dbReference>
<dbReference type="Gene3D" id="1.10.287.4070">
    <property type="match status" value="1"/>
</dbReference>
<dbReference type="Gene3D" id="1.10.246.90">
    <property type="entry name" value="Nop domain"/>
    <property type="match status" value="1"/>
</dbReference>
<dbReference type="InterPro" id="IPR045056">
    <property type="entry name" value="Nop56/Nop58"/>
</dbReference>
<dbReference type="InterPro" id="IPR012974">
    <property type="entry name" value="NOP58/56_N"/>
</dbReference>
<dbReference type="InterPro" id="IPR042239">
    <property type="entry name" value="Nop_C"/>
</dbReference>
<dbReference type="InterPro" id="IPR002687">
    <property type="entry name" value="Nop_dom"/>
</dbReference>
<dbReference type="InterPro" id="IPR036070">
    <property type="entry name" value="Nop_dom_sf"/>
</dbReference>
<dbReference type="InterPro" id="IPR012976">
    <property type="entry name" value="NOSIC"/>
</dbReference>
<dbReference type="PANTHER" id="PTHR10894">
    <property type="entry name" value="NUCLEOLAR PROTEIN 5 NUCLEOLAR PROTEIN NOP5 NOP58"/>
    <property type="match status" value="1"/>
</dbReference>
<dbReference type="PANTHER" id="PTHR10894:SF0">
    <property type="entry name" value="NUCLEOLAR PROTEIN 56"/>
    <property type="match status" value="1"/>
</dbReference>
<dbReference type="Pfam" id="PF01798">
    <property type="entry name" value="Nop"/>
    <property type="match status" value="1"/>
</dbReference>
<dbReference type="Pfam" id="PF08156">
    <property type="entry name" value="NOP5NT"/>
    <property type="match status" value="1"/>
</dbReference>
<dbReference type="SMART" id="SM00931">
    <property type="entry name" value="NOSIC"/>
    <property type="match status" value="1"/>
</dbReference>
<dbReference type="SUPFAM" id="SSF89124">
    <property type="entry name" value="Nop domain"/>
    <property type="match status" value="1"/>
</dbReference>
<dbReference type="PROSITE" id="PS51358">
    <property type="entry name" value="NOP"/>
    <property type="match status" value="1"/>
</dbReference>
<proteinExistence type="evidence at transcript level"/>
<gene>
    <name type="primary">NOP56</name>
    <name type="synonym">NOL5A</name>
    <name type="ORF">QtrA-10084</name>
</gene>
<protein>
    <recommendedName>
        <fullName>Nucleolar protein 56</fullName>
    </recommendedName>
    <alternativeName>
        <fullName>Nucleolar protein 5A</fullName>
    </alternativeName>
</protein>
<accession>Q95K50</accession>
<name>NOP56_MACFA</name>
<evidence type="ECO:0000250" key="1">
    <source>
        <dbReference type="UniProtKB" id="O00567"/>
    </source>
</evidence>
<evidence type="ECO:0000250" key="2">
    <source>
        <dbReference type="UniProtKB" id="Q9D6Z1"/>
    </source>
</evidence>
<evidence type="ECO:0000255" key="3">
    <source>
        <dbReference type="PROSITE-ProRule" id="PRU00690"/>
    </source>
</evidence>
<evidence type="ECO:0000256" key="4">
    <source>
        <dbReference type="SAM" id="MobiDB-lite"/>
    </source>
</evidence>
<evidence type="ECO:0000305" key="5"/>
<reference key="1">
    <citation type="submission" date="2001-07" db="EMBL/GenBank/DDBJ databases">
        <title>Isolation of full-length cDNA clones from macaque brain cDNA libraries.</title>
        <authorList>
            <person name="Osada N."/>
            <person name="Hida M."/>
            <person name="Kusuda J."/>
            <person name="Tanuma R."/>
            <person name="Iseki K."/>
            <person name="Hirai M."/>
            <person name="Terao K."/>
            <person name="Suzuki Y."/>
            <person name="Sugano S."/>
            <person name="Hashimoto K."/>
        </authorList>
    </citation>
    <scope>NUCLEOTIDE SEQUENCE [LARGE SCALE MRNA]</scope>
    <source>
        <tissue>Temporal cortex</tissue>
    </source>
</reference>
<organism>
    <name type="scientific">Macaca fascicularis</name>
    <name type="common">Crab-eating macaque</name>
    <name type="synonym">Cynomolgus monkey</name>
    <dbReference type="NCBI Taxonomy" id="9541"/>
    <lineage>
        <taxon>Eukaryota</taxon>
        <taxon>Metazoa</taxon>
        <taxon>Chordata</taxon>
        <taxon>Craniata</taxon>
        <taxon>Vertebrata</taxon>
        <taxon>Euteleostomi</taxon>
        <taxon>Mammalia</taxon>
        <taxon>Eutheria</taxon>
        <taxon>Euarchontoglires</taxon>
        <taxon>Primates</taxon>
        <taxon>Haplorrhini</taxon>
        <taxon>Catarrhini</taxon>
        <taxon>Cercopithecidae</taxon>
        <taxon>Cercopithecinae</taxon>
        <taxon>Macaca</taxon>
    </lineage>
</organism>
<comment type="function">
    <text evidence="1">Involved in the early to middle stages of 60S ribosomal subunit biogenesis. Required for the biogenesis of box C/D snoRNAs such U3, U8 and U14 snoRNAs. Part of the small subunit (SSU) processome, first precursor of the small eukaryotic ribosomal subunit. During the assembly of the SSU processome in the nucleolus, many ribosome biogenesis factors, an RNA chaperone and ribosomal proteins associate with the nascent pre-rRNA and work in concert to generate RNA folding, modifications, rearrangements and cleavage as well as targeted degradation of pre-ribosomal RNA by the RNA exosome. Core component of box C/D small nucleolar ribonucleoprotein (snoRNP) complexes that function in methylation of multiple sites on ribosomal RNAs (rRNAs) and messenger RNAs (mRNAs).</text>
</comment>
<comment type="subunit">
    <text evidence="1">Part of a large pre-ribosomal ribonucleoprotein (RNP) complex, that consists of at least 62 ribosomal proteins, 45 nonribosomal proteins and both pre-rRNA and mature rRNA species. Within this complex directly interacts with TCOF1 in an RNA-independent manner. Core component of box C/D small nucleolar ribonucleoprotein (snoRNP) particles; the core proteins SNU13, NOP56, NOP58 and FBL or FBLL1 assemble stepwise onto the snoRNA. Interacts with NOP1 and NOP58. Interacts with NUFIP1, RUVBL1 and RUVBL2; RUVBL1:RUVBL2 seem to bridge the association of NOP56 with NUFIP1. Part of the small subunit (SSU) processome, composed of more than 70 proteins and the RNA chaperone small nucleolar RNA (snoRNA) U3. Interacts with NOP2 and FBL.</text>
</comment>
<comment type="subcellular location">
    <subcellularLocation>
        <location evidence="1">Nucleus</location>
        <location evidence="1">Nucleolus</location>
    </subcellularLocation>
    <subcellularLocation>
        <location evidence="2">Cytoplasm</location>
    </subcellularLocation>
    <subcellularLocation>
        <location evidence="1">Nucleus</location>
        <location evidence="1">Nucleoplasm</location>
    </subcellularLocation>
</comment>
<comment type="similarity">
    <text evidence="5">Belongs to the NOP5/NOP56 family.</text>
</comment>
<keyword id="KW-0007">Acetylation</keyword>
<keyword id="KW-0963">Cytoplasm</keyword>
<keyword id="KW-1017">Isopeptide bond</keyword>
<keyword id="KW-0488">Methylation</keyword>
<keyword id="KW-0539">Nucleus</keyword>
<keyword id="KW-0597">Phosphoprotein</keyword>
<keyword id="KW-1185">Reference proteome</keyword>
<keyword id="KW-0690">Ribosome biogenesis</keyword>
<keyword id="KW-0832">Ubl conjugation</keyword>